<sequence length="255" mass="27306">MVALRLIPCLDVANGRVVKGVNFVNLRDSGDPVELACKYSEAGADELVFLDIRASVENRKTLVDLVSRTAKSVKIPFTVGGGINSINSINDLLRAGADKVSLNSSAVKNPDIISKSSTNFGTQCIVIAIDARKKITKYNEWEVYVKGGRENTGLDVISWAKKVEELGAGEILLTSMDGDGTQNGYDLLLTQTVANAVNIPVIASGGAGSVEDIYDVFTKGKASAALLASLLHDKKLTIDEIKSFLIEKKLPIRPN</sequence>
<name>HIS6_PROMP</name>
<dbReference type="EC" id="4.3.2.10" evidence="1"/>
<dbReference type="EMBL" id="BX548174">
    <property type="protein sequence ID" value="CAE18889.1"/>
    <property type="molecule type" value="Genomic_DNA"/>
</dbReference>
<dbReference type="RefSeq" id="WP_011132066.1">
    <property type="nucleotide sequence ID" value="NC_005072.1"/>
</dbReference>
<dbReference type="SMR" id="Q7V2P2"/>
<dbReference type="STRING" id="59919.PMM0430"/>
<dbReference type="KEGG" id="pmm:PMM0430"/>
<dbReference type="eggNOG" id="COG0107">
    <property type="taxonomic scope" value="Bacteria"/>
</dbReference>
<dbReference type="HOGENOM" id="CLU_048577_4_0_3"/>
<dbReference type="OrthoDB" id="9781903at2"/>
<dbReference type="UniPathway" id="UPA00031">
    <property type="reaction ID" value="UER00010"/>
</dbReference>
<dbReference type="Proteomes" id="UP000001026">
    <property type="component" value="Chromosome"/>
</dbReference>
<dbReference type="GO" id="GO:0005737">
    <property type="term" value="C:cytoplasm"/>
    <property type="evidence" value="ECO:0007669"/>
    <property type="project" value="UniProtKB-SubCell"/>
</dbReference>
<dbReference type="GO" id="GO:0000107">
    <property type="term" value="F:imidazoleglycerol-phosphate synthase activity"/>
    <property type="evidence" value="ECO:0007669"/>
    <property type="project" value="UniProtKB-UniRule"/>
</dbReference>
<dbReference type="GO" id="GO:0016829">
    <property type="term" value="F:lyase activity"/>
    <property type="evidence" value="ECO:0007669"/>
    <property type="project" value="UniProtKB-KW"/>
</dbReference>
<dbReference type="GO" id="GO:0000105">
    <property type="term" value="P:L-histidine biosynthetic process"/>
    <property type="evidence" value="ECO:0007669"/>
    <property type="project" value="UniProtKB-UniRule"/>
</dbReference>
<dbReference type="CDD" id="cd04731">
    <property type="entry name" value="HisF"/>
    <property type="match status" value="1"/>
</dbReference>
<dbReference type="FunFam" id="3.20.20.70:FF:000006">
    <property type="entry name" value="Imidazole glycerol phosphate synthase subunit HisF"/>
    <property type="match status" value="1"/>
</dbReference>
<dbReference type="Gene3D" id="3.20.20.70">
    <property type="entry name" value="Aldolase class I"/>
    <property type="match status" value="1"/>
</dbReference>
<dbReference type="HAMAP" id="MF_01013">
    <property type="entry name" value="HisF"/>
    <property type="match status" value="1"/>
</dbReference>
<dbReference type="InterPro" id="IPR013785">
    <property type="entry name" value="Aldolase_TIM"/>
</dbReference>
<dbReference type="InterPro" id="IPR006062">
    <property type="entry name" value="His_biosynth"/>
</dbReference>
<dbReference type="InterPro" id="IPR004651">
    <property type="entry name" value="HisF"/>
</dbReference>
<dbReference type="InterPro" id="IPR050064">
    <property type="entry name" value="IGPS_HisA/HisF"/>
</dbReference>
<dbReference type="InterPro" id="IPR011060">
    <property type="entry name" value="RibuloseP-bd_barrel"/>
</dbReference>
<dbReference type="NCBIfam" id="TIGR00735">
    <property type="entry name" value="hisF"/>
    <property type="match status" value="1"/>
</dbReference>
<dbReference type="PANTHER" id="PTHR21235:SF2">
    <property type="entry name" value="IMIDAZOLE GLYCEROL PHOSPHATE SYNTHASE HISHF"/>
    <property type="match status" value="1"/>
</dbReference>
<dbReference type="PANTHER" id="PTHR21235">
    <property type="entry name" value="IMIDAZOLE GLYCEROL PHOSPHATE SYNTHASE SUBUNIT HISF/H IGP SYNTHASE SUBUNIT HISF/H"/>
    <property type="match status" value="1"/>
</dbReference>
<dbReference type="Pfam" id="PF00977">
    <property type="entry name" value="His_biosynth"/>
    <property type="match status" value="1"/>
</dbReference>
<dbReference type="SUPFAM" id="SSF51366">
    <property type="entry name" value="Ribulose-phoshate binding barrel"/>
    <property type="match status" value="1"/>
</dbReference>
<accession>Q7V2P2</accession>
<comment type="function">
    <text evidence="1">IGPS catalyzes the conversion of PRFAR and glutamine to IGP, AICAR and glutamate. The HisF subunit catalyzes the cyclization activity that produces IGP and AICAR from PRFAR using the ammonia provided by the HisH subunit.</text>
</comment>
<comment type="catalytic activity">
    <reaction evidence="1">
        <text>5-[(5-phospho-1-deoxy-D-ribulos-1-ylimino)methylamino]-1-(5-phospho-beta-D-ribosyl)imidazole-4-carboxamide + L-glutamine = D-erythro-1-(imidazol-4-yl)glycerol 3-phosphate + 5-amino-1-(5-phospho-beta-D-ribosyl)imidazole-4-carboxamide + L-glutamate + H(+)</text>
        <dbReference type="Rhea" id="RHEA:24793"/>
        <dbReference type="ChEBI" id="CHEBI:15378"/>
        <dbReference type="ChEBI" id="CHEBI:29985"/>
        <dbReference type="ChEBI" id="CHEBI:58278"/>
        <dbReference type="ChEBI" id="CHEBI:58359"/>
        <dbReference type="ChEBI" id="CHEBI:58475"/>
        <dbReference type="ChEBI" id="CHEBI:58525"/>
        <dbReference type="EC" id="4.3.2.10"/>
    </reaction>
</comment>
<comment type="pathway">
    <text evidence="1">Amino-acid biosynthesis; L-histidine biosynthesis; L-histidine from 5-phospho-alpha-D-ribose 1-diphosphate: step 5/9.</text>
</comment>
<comment type="subunit">
    <text evidence="1">Heterodimer of HisH and HisF.</text>
</comment>
<comment type="subcellular location">
    <subcellularLocation>
        <location evidence="1">Cytoplasm</location>
    </subcellularLocation>
</comment>
<comment type="similarity">
    <text evidence="1">Belongs to the HisA/HisF family.</text>
</comment>
<protein>
    <recommendedName>
        <fullName evidence="1">Imidazole glycerol phosphate synthase subunit HisF</fullName>
        <ecNumber evidence="1">4.3.2.10</ecNumber>
    </recommendedName>
    <alternativeName>
        <fullName evidence="1">IGP synthase cyclase subunit</fullName>
    </alternativeName>
    <alternativeName>
        <fullName evidence="1">IGP synthase subunit HisF</fullName>
    </alternativeName>
    <alternativeName>
        <fullName evidence="1">ImGP synthase subunit HisF</fullName>
        <shortName evidence="1">IGPS subunit HisF</shortName>
    </alternativeName>
</protein>
<evidence type="ECO:0000255" key="1">
    <source>
        <dbReference type="HAMAP-Rule" id="MF_01013"/>
    </source>
</evidence>
<keyword id="KW-0028">Amino-acid biosynthesis</keyword>
<keyword id="KW-0963">Cytoplasm</keyword>
<keyword id="KW-0368">Histidine biosynthesis</keyword>
<keyword id="KW-0456">Lyase</keyword>
<gene>
    <name evidence="1" type="primary">hisF</name>
    <name type="ordered locus">PMM0430</name>
</gene>
<organism>
    <name type="scientific">Prochlorococcus marinus subsp. pastoris (strain CCMP1986 / NIES-2087 / MED4)</name>
    <dbReference type="NCBI Taxonomy" id="59919"/>
    <lineage>
        <taxon>Bacteria</taxon>
        <taxon>Bacillati</taxon>
        <taxon>Cyanobacteriota</taxon>
        <taxon>Cyanophyceae</taxon>
        <taxon>Synechococcales</taxon>
        <taxon>Prochlorococcaceae</taxon>
        <taxon>Prochlorococcus</taxon>
    </lineage>
</organism>
<feature type="chain" id="PRO_0000142203" description="Imidazole glycerol phosphate synthase subunit HisF">
    <location>
        <begin position="1"/>
        <end position="255"/>
    </location>
</feature>
<feature type="active site" evidence="1">
    <location>
        <position position="11"/>
    </location>
</feature>
<feature type="active site" evidence="1">
    <location>
        <position position="130"/>
    </location>
</feature>
<proteinExistence type="inferred from homology"/>
<reference key="1">
    <citation type="journal article" date="2003" name="Nature">
        <title>Genome divergence in two Prochlorococcus ecotypes reflects oceanic niche differentiation.</title>
        <authorList>
            <person name="Rocap G."/>
            <person name="Larimer F.W."/>
            <person name="Lamerdin J.E."/>
            <person name="Malfatti S."/>
            <person name="Chain P."/>
            <person name="Ahlgren N.A."/>
            <person name="Arellano A."/>
            <person name="Coleman M."/>
            <person name="Hauser L."/>
            <person name="Hess W.R."/>
            <person name="Johnson Z.I."/>
            <person name="Land M.L."/>
            <person name="Lindell D."/>
            <person name="Post A.F."/>
            <person name="Regala W."/>
            <person name="Shah M."/>
            <person name="Shaw S.L."/>
            <person name="Steglich C."/>
            <person name="Sullivan M.B."/>
            <person name="Ting C.S."/>
            <person name="Tolonen A."/>
            <person name="Webb E.A."/>
            <person name="Zinser E.R."/>
            <person name="Chisholm S.W."/>
        </authorList>
    </citation>
    <scope>NUCLEOTIDE SEQUENCE [LARGE SCALE GENOMIC DNA]</scope>
    <source>
        <strain>CCMP1986 / NIES-2087 / MED4</strain>
    </source>
</reference>